<protein>
    <recommendedName>
        <fullName evidence="11 12 13">Alpha-conotoxin PeIA</fullName>
    </recommendedName>
</protein>
<accession>Q1L777</accession>
<keyword id="KW-0002">3D-structure</keyword>
<keyword id="KW-0008">Acetylcholine receptor inhibiting toxin</keyword>
<keyword id="KW-0027">Amidation</keyword>
<keyword id="KW-0108">Calcium channel impairing toxin</keyword>
<keyword id="KW-1015">Disulfide bond</keyword>
<keyword id="KW-0872">Ion channel impairing toxin</keyword>
<keyword id="KW-0528">Neurotoxin</keyword>
<keyword id="KW-0629">Postsynaptic neurotoxin</keyword>
<keyword id="KW-0964">Secreted</keyword>
<keyword id="KW-0800">Toxin</keyword>
<feature type="propeptide" id="PRO_0000247850" evidence="14">
    <location>
        <begin position="1" status="less than"/>
        <end position="21"/>
    </location>
</feature>
<feature type="peptide" id="PRO_0000247851" description="Alpha-conotoxin PeIA" evidence="15 16">
    <location>
        <begin position="22"/>
        <end position="37"/>
    </location>
</feature>
<feature type="region of interest" description="Ser-Xaa-Pro motif, crucial for potent interaction with nAChR" evidence="1">
    <location>
        <begin position="25"/>
        <end position="27"/>
    </location>
</feature>
<feature type="site" description="Important residue for inhibiting alpha-3-beta-2 nAChR" evidence="6">
    <location>
        <position position="26"/>
    </location>
</feature>
<feature type="site" description="Important residue for inhibiting alpha-3-beta-2 nAChR" evidence="6">
    <location>
        <position position="27"/>
    </location>
</feature>
<feature type="site" description="Residue that is not optimum for the most potent inhibition of alpha-3-beta-2 and alpha-6/alpha-3-beta-2-beta-3 and alpha-6/alpha-3-beta-4" evidence="5 6">
    <location>
        <position position="30"/>
    </location>
</feature>
<feature type="site" description="Important residue for inhibiting alpha-3-beta-2 nAChR" evidence="6">
    <location>
        <position position="31"/>
    </location>
</feature>
<feature type="site" description="Important residue for inhibiting alpha-3-beta-2 nAChR" evidence="6">
    <location>
        <position position="32"/>
    </location>
</feature>
<feature type="site" description="Important residue for inhibiting alpha-3-beta-2 and alpha-6/alpha-3-beta-2-beta-3 nAChR" evidence="6">
    <location>
        <position position="33"/>
    </location>
</feature>
<feature type="modified residue" description="Cysteine amide" evidence="15">
    <location>
        <position position="37"/>
    </location>
</feature>
<feature type="disulfide bond" evidence="16 17">
    <location>
        <begin position="23"/>
        <end position="29"/>
    </location>
</feature>
<feature type="disulfide bond" evidence="16 17">
    <location>
        <begin position="24"/>
        <end position="37"/>
    </location>
</feature>
<feature type="mutagenesis site" description="1.9-fold decrease in ability to inhibit alpha-3-beta-2 nAChR and 1.4-fold increase in ability to inhibit alpha-6/alpha-3-beta-2-beta-3 nAChR." evidence="6">
    <original>S</original>
    <variation>A</variation>
    <location>
        <position position="25"/>
    </location>
</feature>
<feature type="mutagenesis site" description="1350-fold and 65-fold decrease in ability to inhibit alpha-3-beta-2 and alpha-6/alpha-3-beta-2-beta-3 nAChR, respectively." evidence="6">
    <original>H</original>
    <variation>A</variation>
    <location>
        <position position="26"/>
    </location>
</feature>
<feature type="mutagenesis site" description="1.4-fold decrease in ability to inhibit alpha-3-beta-2 nAChR and 6.4-fold increase in ability to inhibit alpha-6/alpha-3-beta-2-beta-3 nAChR." evidence="6">
    <original>H</original>
    <variation>N</variation>
    <location>
        <position position="26"/>
    </location>
</feature>
<feature type="mutagenesis site" description="580-fold and 20-fold decrease in ability to inhibit alpha-3-beta-2 and alpha-6/alpha-3-beta-2-beta-3 nAChR, respectively." evidence="6">
    <original>P</original>
    <variation>A</variation>
    <location>
        <position position="27"/>
    </location>
</feature>
<feature type="mutagenesis site" description="4.5-fold decrease in ability to inhibit alpha-3-beta-2 nAChR and 2.5-fold increase in ability to inhibit alpha-6/alpha-3-beta-2-beta-3 nAChR. In PeIA-5667; 33- and 270-fold increase in ability to inhibit rat and human alpha-6-beta-4 nAChRs, respectively (IC(50)=0.20-0.48 nM); when associated with N-30; R-32 and I-36." evidence="6 10">
    <original>A</original>
    <variation>V</variation>
    <location>
        <position position="28"/>
    </location>
</feature>
<feature type="mutagenesis site" description="3.3-fold and 2.4-fold increase in ability to inhibit alpha-3-beta-2 and alpha-6/alpha-3-beta-2-beta-3 nAChR, respectively." evidence="6">
    <original>S</original>
    <variation>A</variation>
    <location>
        <position position="30"/>
    </location>
</feature>
<feature type="mutagenesis site" description="14-fold, 11-fold and 10-fold increase in ability to inhibit alpha-3-beta-2, alpha-6/alpha-3-beta-2-beta-3 and alpha-6/alpha-3-beta-4 nAChR, respectively." evidence="5">
    <original>S</original>
    <variation>H</variation>
    <location>
        <position position="30"/>
    </location>
</feature>
<feature type="mutagenesis site" description="In PeIA-5667; 33- and 270-fold increase in ability to inhibit rat and human alpha-6-beta-4 nAChRs, respectively (IC(50)=0.20-0.48 nM); when associated with V-28; R-32 and I-36." evidence="10">
    <original>S</original>
    <variation>N</variation>
    <location>
        <position position="30"/>
    </location>
</feature>
<feature type="mutagenesis site" description="4.6-fold and 7.5-fold increase in ability to inhibit alpha-3-beta-2 and alpha-6/alpha-3-beta-2-beta-3 nAChR, respectively." evidence="6">
    <original>S</original>
    <variation>R</variation>
    <location>
        <position position="30"/>
    </location>
</feature>
<feature type="mutagenesis site" description="4.4-fold and 4.6-fold increase in ability to inhibit alpha-3-beta-2 and alpha-6/alpha-3-beta-2-beta-3 nAChR, respectively, and 2-fold decrease in ability to inhibit alpha-6/alpha-3-beta-4." evidence="5">
    <original>V</original>
    <variation>A</variation>
    <location>
        <position position="31"/>
    </location>
</feature>
<feature type="mutagenesis site" description="5-fold increase in ability to inhibit alpha-3-beta-2 nAChR and 1.1-fold decrease in ability to inhibit alpha-6/alpha-3-beta-2-beta-3 nAChR." evidence="6">
    <original>V</original>
    <variation>L</variation>
    <location>
        <position position="31"/>
    </location>
</feature>
<feature type="mutagenesis site" description="2400-fold and 33-fold decrease in ability to inhibit alpha-3-beta-2 and alpha-6/alpha-3-beta-2-beta-3 nAChR, respectively." evidence="6">
    <original>V</original>
    <variation>R</variation>
    <location>
        <position position="31"/>
    </location>
</feature>
<feature type="mutagenesis site" description="2.4-fold and 1.7-fold decrease in ability to inhibit alpha-3-beta-2 and alpha-6/alpha-3-beta-2-beta-3 nAChR, respectively." evidence="6">
    <original>N</original>
    <variation>A</variation>
    <location>
        <position position="32"/>
    </location>
</feature>
<feature type="mutagenesis site" description="2.0-fold and 6.6-fold decrease in ability to inhibit alpha-3-beta-2 and alpha-6/alpha-3-beta-2-beta-3 nAChR, respectively." evidence="6">
    <original>N</original>
    <variation>E</variation>
    <location>
        <position position="32"/>
    </location>
</feature>
<feature type="mutagenesis site" description="2400-fold and 2.4-fold decrease in ability to inhibit alpha-3-beta-2 and alpha-6/alpha-3-beta-2-beta-3 nAChR, respectively." evidence="6">
    <original>N</original>
    <variation>K</variation>
    <location>
        <position position="32"/>
    </location>
</feature>
<feature type="mutagenesis site" description="1600-fold and 2.7-fold decrease in ability to inhibit alpha-3-beta-2 and alpha-6/alpha-3-beta-2-beta-3 nAChR, respectively. In PeIA-5667; 33- and 270-fold increase in ability to inhibit rat and human alpha-6-beta-4 nAChRs, respectively (IC(50)=0.20-0.48 nM); when associated with V-28; N-30 and I-36." evidence="6 10">
    <original>N</original>
    <variation>R</variation>
    <location>
        <position position="32"/>
    </location>
</feature>
<feature type="mutagenesis site" description="2700-fold and 420-fold decrease in ability to inhibit alpha-3-beta-2 and alpha-6/alpha-3-beta-2-beta-3 nAChR, respectively." evidence="6">
    <original>H</original>
    <variation>A</variation>
    <location>
        <position position="33"/>
    </location>
</feature>
<feature type="mutagenesis site" description="3.3-fold decrease in ability to inhibit alpha-3-beta-2 nAChR and 1.3-fold increase in ability to inhibit alpha-6/alpha-3-beta-2-beta-3 nAChR." evidence="6">
    <original>P</original>
    <variation>A</variation>
    <location>
        <position position="34"/>
    </location>
</feature>
<feature type="mutagenesis site" description="1.5-fold decrease in ability to inhibit alpha-3-beta-2 and no change in inhibition of alpha-6/alpha-3-beta-2-beta-3 nAChR, respectively." evidence="6">
    <original>P</original>
    <variation>S</variation>
    <location>
        <position position="34"/>
    </location>
</feature>
<feature type="mutagenesis site" description="5.2-fold decrease in ability to inhibit alpha-3-beta-2 nAChR and 1.4-fold increase in ability to inhibit alpha-6/alpha-3-beta-2-beta-3 nAChR." evidence="6">
    <original>E</original>
    <variation>A</variation>
    <location>
        <position position="35"/>
    </location>
</feature>
<feature type="mutagenesis site" description="15-fold, 2-fold and 3-fold decrease in ability to inhibit alpha-3-beta-2, alpha-6/alpha-3-beta-2-beta-3 and alpha-6/alpha-3-beta-4 nAChR, respectively." evidence="5">
    <original>E</original>
    <variation>N</variation>
    <location>
        <position position="35"/>
    </location>
</feature>
<feature type="mutagenesis site" description="7.2-fold and 4.8-fold decrease in ability to inhibit alpha-3-beta-2 and alpha-6/alpha-3-beta-2-beta-3 nAChR, respectively." evidence="6">
    <original>L</original>
    <variation>A</variation>
    <location>
        <position position="36"/>
    </location>
</feature>
<feature type="mutagenesis site" description="In PeIA-5667; 33- and 270-fold increase in ability to inhibit rat and human alpha-6-beta-4 nAChRs, respectively (IC(50)=0.20-0.48 nM); when associated with V-28; N-30; and R-32." evidence="10">
    <original>L</original>
    <variation>I</variation>
    <location>
        <position position="36"/>
    </location>
</feature>
<feature type="mutagenesis site" description="PeIA dimer; increase in activity on both alpha-9-alpha-10/CHRNA9-CHRNA10 and alpha-7/CHRNA7 nAChRs." evidence="9">
    <original>C</original>
    <variation>CGRRRRGGCCSHPACSVNHPELC</variation>
    <location>
        <position position="37"/>
    </location>
</feature>
<feature type="non-terminal residue">
    <location>
        <position position="1"/>
    </location>
</feature>
<feature type="helix" evidence="18">
    <location>
        <begin position="23"/>
        <end position="25"/>
    </location>
</feature>
<feature type="helix" evidence="18">
    <location>
        <begin position="27"/>
        <end position="30"/>
    </location>
</feature>
<feature type="turn" evidence="18">
    <location>
        <begin position="34"/>
        <end position="36"/>
    </location>
</feature>
<evidence type="ECO:0000250" key="1">
    <source>
        <dbReference type="UniProtKB" id="P56636"/>
    </source>
</evidence>
<evidence type="ECO:0000250" key="2">
    <source>
        <dbReference type="UniProtKB" id="P85013"/>
    </source>
</evidence>
<evidence type="ECO:0000269" key="3">
    <source>
    </source>
</evidence>
<evidence type="ECO:0000269" key="4">
    <source>
    </source>
</evidence>
<evidence type="ECO:0000269" key="5">
    <source>
    </source>
</evidence>
<evidence type="ECO:0000269" key="6">
    <source>
    </source>
</evidence>
<evidence type="ECO:0000269" key="7">
    <source>
    </source>
</evidence>
<evidence type="ECO:0000269" key="8">
    <source>
    </source>
</evidence>
<evidence type="ECO:0000269" key="9">
    <source>
    </source>
</evidence>
<evidence type="ECO:0000269" key="10">
    <source>
    </source>
</evidence>
<evidence type="ECO:0000303" key="11">
    <source>
    </source>
</evidence>
<evidence type="ECO:0000303" key="12">
    <source>
    </source>
</evidence>
<evidence type="ECO:0000303" key="13">
    <source>
    </source>
</evidence>
<evidence type="ECO:0000305" key="14"/>
<evidence type="ECO:0000305" key="15">
    <source>
    </source>
</evidence>
<evidence type="ECO:0000305" key="16">
    <source>
    </source>
</evidence>
<evidence type="ECO:0000312" key="17">
    <source>
        <dbReference type="PDB" id="5JME"/>
    </source>
</evidence>
<evidence type="ECO:0007829" key="18">
    <source>
        <dbReference type="PDB" id="5JME"/>
    </source>
</evidence>
<reference key="1">
    <citation type="journal article" date="2005" name="J. Biol. Chem.">
        <title>A novel alpha-conotoxin, PeIA, cloned from Conus pergrandis, discriminates between rat alpha9alpha10 and alpha7 nicotinic cholinergic receptors.</title>
        <authorList>
            <person name="McIntosh J.M."/>
            <person name="Plazas P.V."/>
            <person name="Watkins M."/>
            <person name="Gomez-Casati M.E."/>
            <person name="Olivera B.M."/>
            <person name="Elgoyhen A.B."/>
        </authorList>
    </citation>
    <scope>NUCLEOTIDE SEQUENCE [GENOMIC DNA]</scope>
    <scope>FUNCTION</scope>
    <scope>SYNTHESIS OF 22-37</scope>
    <scope>AMIDATION AT CYS-37</scope>
    <source>
        <tissue>Hepatopancreas</tissue>
    </source>
</reference>
<reference key="2">
    <citation type="journal article" date="2011" name="J. Biol. Chem.">
        <title>Structure and activity of alpha-conotoxin PeIA at nicotinic acetylcholine receptor subtypes and GABA(B) receptor-coupled N-type calcium channels.</title>
        <authorList>
            <person name="Daly N.L."/>
            <person name="Callaghan B."/>
            <person name="Clark R.J."/>
            <person name="Nevin S.T."/>
            <person name="Adams D.J."/>
            <person name="Craik D.J."/>
        </authorList>
    </citation>
    <scope>FUNCTION</scope>
    <scope>STRUCTURE BY NMR</scope>
    <scope>DISULFIDE BOND</scope>
    <scope>SYNTHESIS OF 22-37</scope>
</reference>
<reference key="3">
    <citation type="journal article" date="2012" name="Mol. Pharmacol.">
        <title>alpha-Conotoxin PeIA[S9H,V10A,E14N] potently and selectively blocks alpha6beta2beta3 versus alpha6beta4 nicotinic acetylcholine receptors.</title>
        <authorList>
            <person name="Hone A.J."/>
            <person name="Scadden M."/>
            <person name="Gajewiak J."/>
            <person name="Christensen S."/>
            <person name="Lindstrom J."/>
            <person name="McIntosh J.M."/>
        </authorList>
    </citation>
    <scope>FUNCTION</scope>
    <scope>MUTAGENESIS OF SER-30; VAL-31 AND GLU-35</scope>
    <scope>SYNTHESIS OF 22-37</scope>
</reference>
<reference key="4">
    <citation type="journal article" date="2013" name="J. Biol. Chem.">
        <title>Positional scanning mutagenesis of alpha-conotoxin PeIA identifies critical residues that confer potency and selectivity for alpha6/alpha3beta2beta3 and alpha3beta2 nicotinic acetylcholine receptors.</title>
        <authorList>
            <person name="Hone A.J."/>
            <person name="Ruiz M."/>
            <person name="Scadden M."/>
            <person name="Christensen S."/>
            <person name="Gajewiak J."/>
            <person name="Azam L."/>
            <person name="McIntosh J.M."/>
        </authorList>
    </citation>
    <scope>FUNCTION</scope>
    <scope>MUTAGENESIS OF SER-25; HIS-26; PRO-27; ALA-28; SER-30; VAL-31; ASN-32; HIS-33; PRO-34; GLU-35 AND LEU-36</scope>
    <scope>SYNTHESIS OF 22-37</scope>
</reference>
<reference key="5">
    <citation type="journal article" date="2015" name="Mol. Pharmacol.">
        <title>Alpha-conotoxins identify the alpha3beta4* subtype as the predominant nicotinic acetylcholine receptor expressed in human adrenal chromaffin cells.</title>
        <authorList>
            <person name="Hone A.J."/>
            <person name="McIntosh J.M."/>
            <person name="Azam L."/>
            <person name="Lindstrom J."/>
            <person name="Lucero L."/>
            <person name="Whiteaker P."/>
            <person name="Passas J."/>
            <person name="Blazquez J."/>
            <person name="Albillos A."/>
        </authorList>
    </citation>
    <scope>MUTAGENESIS OF ALA-28; SER-30; VAL-31; ASN-32 AND GLU-35</scope>
    <scope>SYNTHESIS OF 22-37</scope>
</reference>
<reference key="6">
    <citation type="journal article" date="2016" name="Mol. Pharmacol.">
        <title>Correction to 'alpha-conotoxins identify the alpha3beta4* subtype as the predominant nicotinic acetylcholine receptor expressed in human adrenal chromaffin cells'.</title>
        <authorList>
            <person name="Hone A.J."/>
            <person name="McIntosh J.M."/>
            <person name="Azam L."/>
            <person name="Lindstrom J."/>
            <person name="Lucero L."/>
            <person name="Whiteaker P."/>
            <person name="Passas J."/>
            <person name="Blazquez J."/>
            <person name="Albillos A."/>
        </authorList>
    </citation>
    <scope>ERRATUM OF PUBMED:26330550</scope>
</reference>
<reference key="7">
    <citation type="journal article" date="2015" name="FASEB J.">
        <title>Inhibition of cholinergic pathways in Drosophila melanogaster by alpha-conotoxins.</title>
        <authorList>
            <person name="Heghinian M.D."/>
            <person name="Mejia M."/>
            <person name="Adams D.J."/>
            <person name="Godenschwege T.A."/>
            <person name="Mari F."/>
        </authorList>
    </citation>
    <scope>FUNCTION</scope>
</reference>
<reference key="8">
    <citation type="journal article" date="2020" name="J. Med. Chem.">
        <title>Dimerization of alpha-conotoxins as a strategy to enhance the inhibition of the human alpha7 and alpha9alpha10 nicotinic acetylcholine Receptors.</title>
        <authorList>
            <person name="Liang J."/>
            <person name="Tae H.S."/>
            <person name="Xu X."/>
            <person name="Jiang T."/>
            <person name="Adams D.J."/>
            <person name="Yu R."/>
        </authorList>
    </citation>
    <scope>FUNCTION</scope>
    <scope>MUTAGENESIS OF CYS-37</scope>
</reference>
<reference key="9">
    <citation type="journal article" date="2021" name="J. Med. Chem.">
        <title>Computational and functional mapping of human and rat alpha6beta4 nicotinic acetylcholine receptors reveals species-specific ligand-binding motifs.</title>
        <authorList>
            <person name="Hone A.J."/>
            <person name="Kaas Q."/>
            <person name="Kearns I."/>
            <person name="Hararah F."/>
            <person name="Gajewiak J."/>
            <person name="Christensen S."/>
            <person name="Craik D.J."/>
            <person name="McIntosh J.M."/>
        </authorList>
    </citation>
    <scope>FUNCTION</scope>
    <scope>SYNTHESIS OF 22-37</scope>
    <scope>MUTAGENESIS OF ALA-28; SER-30; ASN-32 AND LEU-36</scope>
</reference>
<sequence length="38" mass="3900">FDGRNAAANDKASDLVALTVRGCCSHPACSVNHPELCG</sequence>
<organism>
    <name type="scientific">Conus pergrandis</name>
    <name type="common">Grand cone</name>
    <dbReference type="NCBI Taxonomy" id="330676"/>
    <lineage>
        <taxon>Eukaryota</taxon>
        <taxon>Metazoa</taxon>
        <taxon>Spiralia</taxon>
        <taxon>Lophotrochozoa</taxon>
        <taxon>Mollusca</taxon>
        <taxon>Gastropoda</taxon>
        <taxon>Caenogastropoda</taxon>
        <taxon>Neogastropoda</taxon>
        <taxon>Conoidea</taxon>
        <taxon>Conidae</taxon>
        <taxon>Conus</taxon>
        <taxon>Embrikena</taxon>
    </lineage>
</organism>
<name>CA1A_CONPR</name>
<proteinExistence type="inferred from homology"/>
<dbReference type="EMBL" id="DQ008450">
    <property type="protein sequence ID" value="AAY57814.1"/>
    <property type="molecule type" value="Genomic_DNA"/>
</dbReference>
<dbReference type="PDB" id="5JME">
    <property type="method" value="X-ray"/>
    <property type="resolution" value="2.34 A"/>
    <property type="chains" value="F/G/H/I=22-37"/>
</dbReference>
<dbReference type="PDBsum" id="5JME"/>
<dbReference type="SMR" id="Q1L777"/>
<dbReference type="ConoServer" id="5">
    <property type="toxin name" value="PeIA precursor"/>
</dbReference>
<dbReference type="GO" id="GO:0005576">
    <property type="term" value="C:extracellular region"/>
    <property type="evidence" value="ECO:0007669"/>
    <property type="project" value="UniProtKB-SubCell"/>
</dbReference>
<dbReference type="GO" id="GO:0035792">
    <property type="term" value="C:host cell postsynaptic membrane"/>
    <property type="evidence" value="ECO:0007669"/>
    <property type="project" value="UniProtKB-KW"/>
</dbReference>
<dbReference type="GO" id="GO:0030550">
    <property type="term" value="F:acetylcholine receptor inhibitor activity"/>
    <property type="evidence" value="ECO:0007669"/>
    <property type="project" value="UniProtKB-KW"/>
</dbReference>
<dbReference type="GO" id="GO:0005246">
    <property type="term" value="F:calcium channel regulator activity"/>
    <property type="evidence" value="ECO:0007669"/>
    <property type="project" value="UniProtKB-KW"/>
</dbReference>
<dbReference type="GO" id="GO:0090729">
    <property type="term" value="F:toxin activity"/>
    <property type="evidence" value="ECO:0007669"/>
    <property type="project" value="UniProtKB-KW"/>
</dbReference>
<dbReference type="InterPro" id="IPR009958">
    <property type="entry name" value="Conotoxin_a-typ"/>
</dbReference>
<dbReference type="Pfam" id="PF07365">
    <property type="entry name" value="Toxin_8"/>
    <property type="match status" value="1"/>
</dbReference>
<comment type="function">
    <text evidence="3 4 5 6 7 10">Alpha-conotoxins act on postsynaptic membranes, they bind to the nicotinic acetylcholine receptors (nAChR) and thus inhibit them. This synthetic peptide potently and reversibly blocks alpha-9-alpha-10/CHRNA9-CHRNA10 nAChR (IC(50)=6.9-54.9 nM), alpha-3-beta-2/CHRNA3-CHRNB2 (IC(50)=9.7-97.5 nM) and alpha-6/alpha-3-beta-2-beta-3 (CHRNA6/CHRNA3-CHRNB2-CHRNB3) (IC(50)=11.1-17.2 nM) (PubMed:15983035, PubMed:21252227, PubMed:22914547, PubMed:23846688, PubMed:32101438). It also inhibits alpha-6/alpha-3-beta-4 (CHRNA6/CHRNA3-CHRNB4) nAChR with a higher potency on human (IC(50)=6.75 nM) than on rat receptors (IC(50)=130-147 nM) (PubMed:22914547, PubMed:33523678). Also shows a weak ability to inhibit alpha-3-beta-4/CHRNA3-CHRNB4 (IC(50)=480-1500 nM) (PubMed:15983035, PubMed:22914547). This synthetic toxin also inhibits N-type calcium channels (Ca2.2/CACNA1B) (IC(50)=1.1 nM) via the activation of the G protein-coupled GABA(B) receptor in DRG neurons (PubMed:21252227). Also exhibits inhibition of D.melanogaster alpha-7/CHRNA7 nAChRs (PubMed:25466886).</text>
</comment>
<comment type="subcellular location">
    <subcellularLocation>
        <location evidence="2">Secreted</location>
    </subcellularLocation>
</comment>
<comment type="tissue specificity">
    <text evidence="14">Expressed by the venom duct.</text>
</comment>
<comment type="domain">
    <text evidence="14">The cysteine framework is I (CC-C-C). Alpha4/7 pattern.</text>
</comment>
<comment type="PTM">
    <text evidence="6">The hydroxylation at position Pro-27 is critical, since an hydroxylation at this position decreases potency of the toxin to inhibit both alpha-3-beta-2 (1300-fold) and alpha-6/alpha-3-beta-2-beta-3 (130-fold) nAChRs.</text>
</comment>
<comment type="PTM">
    <text evidence="6">A non-modified residue at position Pro-34 is critical, since a hydroxylation at this position decreases potency of the toxin to inhibit alpha-3-beta-2 (1-45-fold) and increases potency to inhibit alpha-6/alpha-3-beta-2-beta-3 (1.77-fold) nAChRs.</text>
</comment>
<comment type="miscellaneous">
    <text evidence="3 4 9">Negative results: shows a very weak or no inhibition on mammalian muscle alpha-1-beta-1-gamma-delta, neuronal alpha-7, and neuronal alpha-4-beta-2 nAChR.</text>
</comment>
<comment type="miscellaneous">
    <text evidence="6 8">The mutant [A28V, S30H, V31A, N32R, E35A] is &gt;15'000-fold more potent at inhibiting alpha-6/alpha-3-beta-2-beta-3 than alpha-3-beta-2, and is essentially inactive on all other non-alpha6-containing nAChRs including alpha-3-beta-4, alpha-4-beta-2, alpha-4-beta-4 and alpha-7 (PubMed:23846688). This mutant shows inhibition on alpha-6/alpha-3-beta-2-beta-3 (IC(50)=3.8 nM), beta-3-alpha-6-beta-2-alpha-4-beta-2 (IC(50)=6.3 nM), alpha-3-beta-4 (IC(50)=3.7 uM), alpha-3-beta-2 (IC(50)=6.1 uM), beta-4-alpha-3-beta-4-alpha-3-alpha-5 (IC(50)=9.2 uM), and does not inhibit alpha-4-beta-2 and alpha-4-beta-4 nAChRs (PubMed:26330550).</text>
</comment>
<comment type="miscellaneous">
    <text evidence="5">The mutant [S30H, V31A, E35N] is &gt;290-fold more potent at inhibiting alpha-6/alpha-3-beta-2-beta-3 than alpha-6/alpha-3-beta-4, demonstrating that it can discriminate between alpha-6-beta-2-beta-3 and alpha-6-beta-4 nAChRs.</text>
</comment>
<comment type="miscellaneous">
    <text evidence="10">The mutant PeIA-5667 [A28V, S30N, N11R, L36I] is much more potent at inhibiting alpha-6/alpha-3-beta-4 nAChR than the wild-type toxin on both rat (IC(50)=0.20 nM) and human channels (IC(50)=0.48 nM). It shows moderate activity on alpha-3-beta-4 nAChR (IC(50)=179-230 nM on rat and human channels) and on alpha-6/alpha-3-beta-2-beta-3 nAChR (IC(50)=111-135 nM on rat and human channels). It does not show activity on all other channels tested.</text>
</comment>
<comment type="similarity">
    <text evidence="14">Belongs to the conotoxin A superfamily.</text>
</comment>